<keyword id="KW-0007">Acetylation</keyword>
<keyword id="KW-0010">Activator</keyword>
<keyword id="KW-0965">Cell junction</keyword>
<keyword id="KW-0175">Coiled coil</keyword>
<keyword id="KW-0238">DNA-binding</keyword>
<keyword id="KW-1017">Isopeptide bond</keyword>
<keyword id="KW-0488">Methylation</keyword>
<keyword id="KW-0507">mRNA processing</keyword>
<keyword id="KW-0508">mRNA splicing</keyword>
<keyword id="KW-0539">Nucleus</keyword>
<keyword id="KW-0597">Phosphoprotein</keyword>
<keyword id="KW-1185">Reference proteome</keyword>
<keyword id="KW-0747">Spliceosome</keyword>
<keyword id="KW-0804">Transcription</keyword>
<keyword id="KW-0805">Transcription regulation</keyword>
<keyword id="KW-0832">Ubl conjugation</keyword>
<protein>
    <recommendedName>
        <fullName>Pinin</fullName>
    </recommendedName>
</protein>
<sequence length="773" mass="88096">MAVAVRTLQEQLEKAKESLKNVDENIRKLTGRDPNDVRPIQARLLALSGPGGGRGRGSLLLRRGFSDSGGGPPAKQRDLEGAVSRLGGERRTRRESRQESDPEDDDVKKPALQSSVVATSKERTRRDLIQDQNMDEKGKQRNRRIFGLLMGTLQKFKQESTVATERQKRRQEIEQKLEVQAEEERKQVENERRELFEERRAKQTELRLLEQKVELAQLQEEWNEHNAKIIKYIRTKTKPHLFYILGRMCPATQKLIEESQRKMNALFEGRRIEFAEQINKMEARPRRQSMKEKEHQVVRNEEQKAEQEEGKVAQREEELEETGNQHNDVEIEEAGEEEEKEIGIVHSDAEKEQEEEEQKQEMEVKIEEETEVRESEKQQDSQPEEVMDVLEMLLHVAVKNVIAEQEVMETNQVESVEPSENETSKELEPEMEFEVEPDKECKSLSPVRENASALEMENEPEEKEERESEPQPEPVRHLQPLPQPEPEPELQPEPQPQLQPEPQLQPQLQLQLQPQPQSQSQPQPQLQLPLPLPLQPQPQVQAQSQPQAVLQPQPVSQPETLPLAVLQAPVQVIQEQGHLLPERKEFPVESVKLTEVTVEPVLIVHSDSKTKTKTRSRSRGRARNKTSKSRSRSSSSSSSSSSSTSSSSGGSSSSGSSSSRSSSSSSSSTSGSSRRDSSSSTTSSSESRSRSRGRGHNRDRKHRRSVDRKRRDTSGLERSHKSSKGGSSRDTKGSKDKNSRSDRKRSISESSRSGKRSSRSERDRKSDRKDKRR</sequence>
<feature type="initiator methionine" description="Removed" evidence="3">
    <location>
        <position position="1"/>
    </location>
</feature>
<feature type="chain" id="PRO_0000190241" description="Pinin">
    <location>
        <begin position="2"/>
        <end position="773"/>
    </location>
</feature>
<feature type="region of interest" description="Disordered" evidence="5">
    <location>
        <begin position="46"/>
        <end position="139"/>
    </location>
</feature>
<feature type="region of interest" description="Sufficient for PSAP complex assembly" evidence="1">
    <location>
        <begin position="221"/>
        <end position="284"/>
    </location>
</feature>
<feature type="region of interest" description="Disordered" evidence="5">
    <location>
        <begin position="280"/>
        <end position="386"/>
    </location>
</feature>
<feature type="region of interest" description="Disordered" evidence="5">
    <location>
        <begin position="404"/>
        <end position="555"/>
    </location>
</feature>
<feature type="region of interest" description="Disordered" evidence="5">
    <location>
        <begin position="595"/>
        <end position="773"/>
    </location>
</feature>
<feature type="coiled-coil region" evidence="4">
    <location>
        <begin position="2"/>
        <end position="32"/>
    </location>
</feature>
<feature type="coiled-coil region" evidence="4">
    <location>
        <begin position="163"/>
        <end position="234"/>
    </location>
</feature>
<feature type="coiled-coil region" evidence="4">
    <location>
        <begin position="287"/>
        <end position="379"/>
    </location>
</feature>
<feature type="compositionally biased region" description="Basic and acidic residues" evidence="5">
    <location>
        <begin position="87"/>
        <end position="100"/>
    </location>
</feature>
<feature type="compositionally biased region" description="Basic and acidic residues" evidence="5">
    <location>
        <begin position="120"/>
        <end position="139"/>
    </location>
</feature>
<feature type="compositionally biased region" description="Basic and acidic residues" evidence="5">
    <location>
        <begin position="280"/>
        <end position="316"/>
    </location>
</feature>
<feature type="compositionally biased region" description="Acidic residues" evidence="5">
    <location>
        <begin position="330"/>
        <end position="340"/>
    </location>
</feature>
<feature type="compositionally biased region" description="Basic and acidic residues" evidence="5">
    <location>
        <begin position="341"/>
        <end position="350"/>
    </location>
</feature>
<feature type="compositionally biased region" description="Basic and acidic residues" evidence="5">
    <location>
        <begin position="359"/>
        <end position="379"/>
    </location>
</feature>
<feature type="compositionally biased region" description="Pro residues" evidence="5">
    <location>
        <begin position="481"/>
        <end position="499"/>
    </location>
</feature>
<feature type="compositionally biased region" description="Low complexity" evidence="5">
    <location>
        <begin position="500"/>
        <end position="529"/>
    </location>
</feature>
<feature type="compositionally biased region" description="Low complexity" evidence="5">
    <location>
        <begin position="537"/>
        <end position="555"/>
    </location>
</feature>
<feature type="compositionally biased region" description="Basic residues" evidence="5">
    <location>
        <begin position="611"/>
        <end position="631"/>
    </location>
</feature>
<feature type="compositionally biased region" description="Low complexity" evidence="5">
    <location>
        <begin position="632"/>
        <end position="686"/>
    </location>
</feature>
<feature type="compositionally biased region" description="Basic residues" evidence="5">
    <location>
        <begin position="690"/>
        <end position="708"/>
    </location>
</feature>
<feature type="compositionally biased region" description="Basic and acidic residues" evidence="5">
    <location>
        <begin position="709"/>
        <end position="720"/>
    </location>
</feature>
<feature type="compositionally biased region" description="Basic and acidic residues" evidence="5">
    <location>
        <begin position="727"/>
        <end position="747"/>
    </location>
</feature>
<feature type="compositionally biased region" description="Basic and acidic residues" evidence="5">
    <location>
        <begin position="758"/>
        <end position="773"/>
    </location>
</feature>
<feature type="modified residue" description="N-acetylalanine" evidence="3">
    <location>
        <position position="2"/>
    </location>
</feature>
<feature type="modified residue" description="Phosphoserine" evidence="3">
    <location>
        <position position="48"/>
    </location>
</feature>
<feature type="modified residue" description="Omega-N-methylarginine" evidence="2">
    <location>
        <position position="54"/>
    </location>
</feature>
<feature type="modified residue" description="Phosphoserine" evidence="3">
    <location>
        <position position="58"/>
    </location>
</feature>
<feature type="modified residue" description="Phosphoserine" evidence="3">
    <location>
        <position position="66"/>
    </location>
</feature>
<feature type="modified residue" description="Phosphoserine" evidence="3">
    <location>
        <position position="96"/>
    </location>
</feature>
<feature type="modified residue" description="Phosphoserine" evidence="3">
    <location>
        <position position="100"/>
    </location>
</feature>
<feature type="modified residue" description="Phosphoserine" evidence="3">
    <location>
        <position position="114"/>
    </location>
</feature>
<feature type="modified residue" description="Phosphoserine" evidence="3">
    <location>
        <position position="115"/>
    </location>
</feature>
<feature type="modified residue" description="Phosphothreonine" evidence="3">
    <location>
        <position position="124"/>
    </location>
</feature>
<feature type="modified residue" description="N6-acetyllysine; alternate" evidence="3">
    <location>
        <position position="238"/>
    </location>
</feature>
<feature type="modified residue" description="N6-succinyllysine; alternate" evidence="2">
    <location>
        <position position="238"/>
    </location>
</feature>
<feature type="modified residue" description="Phosphoserine" evidence="3">
    <location>
        <position position="347"/>
    </location>
</feature>
<feature type="modified residue" description="Phosphoserine" evidence="3">
    <location>
        <position position="375"/>
    </location>
</feature>
<feature type="modified residue" description="Phosphoserine" evidence="3">
    <location>
        <position position="381"/>
    </location>
</feature>
<feature type="modified residue" description="Phosphoserine" evidence="2">
    <location>
        <position position="445"/>
    </location>
</feature>
<feature type="modified residue" description="Phosphoserine" evidence="3">
    <location>
        <position position="452"/>
    </location>
</feature>
<feature type="modified residue" description="Phosphoserine" evidence="3">
    <location>
        <position position="608"/>
    </location>
</feature>
<feature type="modified residue" description="Phosphoserine" evidence="3">
    <location>
        <position position="714"/>
    </location>
</feature>
<feature type="modified residue" description="Phosphoserine" evidence="3">
    <location>
        <position position="748"/>
    </location>
</feature>
<feature type="modified residue" description="Phosphoserine" evidence="3">
    <location>
        <position position="751"/>
    </location>
</feature>
<feature type="cross-link" description="Glycyl lysine isopeptide (Lys-Gly) (interchain with G-Cter in SUMO2)" evidence="3">
    <location>
        <position position="109"/>
    </location>
</feature>
<feature type="cross-link" description="Glycyl lysine isopeptide (Lys-Gly) (interchain with G-Cter in SUMO2)" evidence="3">
    <location>
        <position position="121"/>
    </location>
</feature>
<feature type="cross-link" description="Glycyl lysine isopeptide (Lys-Gly) (interchain with G-Cter in SUMO2)" evidence="3">
    <location>
        <position position="137"/>
    </location>
</feature>
<feature type="cross-link" description="Glycyl lysine isopeptide (Lys-Gly) (interchain with G-Cter in SUMO2)" evidence="3">
    <location>
        <position position="155"/>
    </location>
</feature>
<feature type="cross-link" description="Glycyl lysine isopeptide (Lys-Gly) (interchain with G-Cter in SUMO1); alternate" evidence="3">
    <location>
        <position position="157"/>
    </location>
</feature>
<feature type="cross-link" description="Glycyl lysine isopeptide (Lys-Gly) (interchain with G-Cter in SUMO2); alternate" evidence="3">
    <location>
        <position position="157"/>
    </location>
</feature>
<feature type="cross-link" description="Glycyl lysine isopeptide (Lys-Gly) (interchain with G-Cter in SUMO2)" evidence="3">
    <location>
        <position position="228"/>
    </location>
</feature>
<feature type="cross-link" description="Glycyl lysine isopeptide (Lys-Gly) (interchain with G-Cter in SUMO2)" evidence="3">
    <location>
        <position position="280"/>
    </location>
</feature>
<feature type="cross-link" description="Glycyl lysine isopeptide (Lys-Gly) (interchain with G-Cter in SUMO2)" evidence="3">
    <location>
        <position position="304"/>
    </location>
</feature>
<feature type="cross-link" description="Glycyl lysine isopeptide (Lys-Gly) (interchain with G-Cter in SUMO2)" evidence="3">
    <location>
        <position position="311"/>
    </location>
</feature>
<feature type="cross-link" description="Glycyl lysine isopeptide (Lys-Gly) (interchain with G-Cter in SUMO2)" evidence="3">
    <location>
        <position position="359"/>
    </location>
</feature>
<feature type="cross-link" description="Glycyl lysine isopeptide (Lys-Gly) (interchain with G-Cter in SUMO2)" evidence="3">
    <location>
        <position position="365"/>
    </location>
</feature>
<feature type="cross-link" description="Glycyl lysine isopeptide (Lys-Gly) (interchain with G-Cter in SUMO2)" evidence="3">
    <location>
        <position position="584"/>
    </location>
</feature>
<feature type="cross-link" description="Glycyl lysine isopeptide (Lys-Gly) (interchain with G-Cter in SUMO2)" evidence="3">
    <location>
        <position position="592"/>
    </location>
</feature>
<feature type="cross-link" description="Glycyl lysine isopeptide (Lys-Gly) (interchain with G-Cter in SUMO2)" evidence="3">
    <location>
        <position position="609"/>
    </location>
</feature>
<comment type="function">
    <text evidence="1">Transcriptional activator binding to the E-box 1 core sequence of the E-cadherin promoter gene; the core-binding sequence is 5'CAGGTG-3'. Capable of reversing CTBP1-mediated transcription repression. Auxiliary component of the splicing-dependent multiprotein exon junction complex (EJC) deposited at splice junction on mRNAs. The EJC is a dynamic structure consisting of core proteins and several peripheral nuclear and cytoplasmic associated factors that join the complex only transiently either during EJC assembly or during subsequent mRNA metabolism. Participates in the regulation of alternative pre-mRNA splicing. Associates to spliced mRNA within 60 nt upstream of the 5'-splice sites. Component of the PSAP complex which binds RNA in a sequence-independent manner and is proposed to be recruited to the EJC prior to or during the splicing process and to regulate specific excision of introns in specific transcription subsets. Involved in the establishment and maintenance of epithelia cell-cell adhesion (By similarity).</text>
</comment>
<comment type="subunit">
    <text evidence="1">Found in a mRNA splicing-dependent exon junction complex (EJC). Found in a complex with SR proteins. Found in a mRNP complex with RNPS1. Component of the PSAP complex consisting of RNPS1, SAP18 and PNN. Interacts with PNISR, CTBP1, CTBP2, KRT8, KRT18, KRT19, PS1D/PNO40, PPIG, RNPS1, SFRS4 and SRRM2. Identified in the spliceosome C complex (By similarity).</text>
</comment>
<comment type="subcellular location">
    <subcellularLocation>
        <location evidence="1">Nucleus speckle</location>
    </subcellularLocation>
    <subcellularLocation>
        <location evidence="1">Cell junction</location>
        <location evidence="1">Desmosome</location>
    </subcellularLocation>
    <text evidence="1">Cell-cell contact area, predominantly desmosome of intercellular adherens junction. Not a nucleocytoplasmic shuttling protein (By similarity).</text>
</comment>
<comment type="similarity">
    <text evidence="6">Belongs to the pinin family.</text>
</comment>
<evidence type="ECO:0000250" key="1"/>
<evidence type="ECO:0000250" key="2">
    <source>
        <dbReference type="UniProtKB" id="O35691"/>
    </source>
</evidence>
<evidence type="ECO:0000250" key="3">
    <source>
        <dbReference type="UniProtKB" id="Q9H307"/>
    </source>
</evidence>
<evidence type="ECO:0000255" key="4"/>
<evidence type="ECO:0000256" key="5">
    <source>
        <dbReference type="SAM" id="MobiDB-lite"/>
    </source>
</evidence>
<evidence type="ECO:0000305" key="6"/>
<accession>P79149</accession>
<proteinExistence type="evidence at transcript level"/>
<organism>
    <name type="scientific">Canis lupus familiaris</name>
    <name type="common">Dog</name>
    <name type="synonym">Canis familiaris</name>
    <dbReference type="NCBI Taxonomy" id="9615"/>
    <lineage>
        <taxon>Eukaryota</taxon>
        <taxon>Metazoa</taxon>
        <taxon>Chordata</taxon>
        <taxon>Craniata</taxon>
        <taxon>Vertebrata</taxon>
        <taxon>Euteleostomi</taxon>
        <taxon>Mammalia</taxon>
        <taxon>Eutheria</taxon>
        <taxon>Laurasiatheria</taxon>
        <taxon>Carnivora</taxon>
        <taxon>Caniformia</taxon>
        <taxon>Canidae</taxon>
        <taxon>Canis</taxon>
    </lineage>
</organism>
<dbReference type="EMBL" id="U77716">
    <property type="protein sequence ID" value="AAB48303.1"/>
    <property type="molecule type" value="mRNA"/>
</dbReference>
<dbReference type="SMR" id="P79149"/>
<dbReference type="FunCoup" id="P79149">
    <property type="interactions" value="982"/>
</dbReference>
<dbReference type="STRING" id="9615.ENSCAFP00000020449"/>
<dbReference type="PaxDb" id="9612-ENSCAFP00000020449"/>
<dbReference type="eggNOG" id="KOG3756">
    <property type="taxonomic scope" value="Eukaryota"/>
</dbReference>
<dbReference type="InParanoid" id="P79149"/>
<dbReference type="OrthoDB" id="330772at2759"/>
<dbReference type="Proteomes" id="UP000002254">
    <property type="component" value="Unplaced"/>
</dbReference>
<dbReference type="Proteomes" id="UP000694429">
    <property type="component" value="Unplaced"/>
</dbReference>
<dbReference type="Proteomes" id="UP000694542">
    <property type="component" value="Unplaced"/>
</dbReference>
<dbReference type="Proteomes" id="UP000805418">
    <property type="component" value="Unplaced"/>
</dbReference>
<dbReference type="GO" id="GO:0071013">
    <property type="term" value="C:catalytic step 2 spliceosome"/>
    <property type="evidence" value="ECO:0000318"/>
    <property type="project" value="GO_Central"/>
</dbReference>
<dbReference type="GO" id="GO:0030057">
    <property type="term" value="C:desmosome"/>
    <property type="evidence" value="ECO:0000314"/>
    <property type="project" value="MGI"/>
</dbReference>
<dbReference type="GO" id="GO:0016607">
    <property type="term" value="C:nuclear speck"/>
    <property type="evidence" value="ECO:0007669"/>
    <property type="project" value="UniProtKB-SubCell"/>
</dbReference>
<dbReference type="GO" id="GO:0003677">
    <property type="term" value="F:DNA binding"/>
    <property type="evidence" value="ECO:0007669"/>
    <property type="project" value="UniProtKB-KW"/>
</dbReference>
<dbReference type="GO" id="GO:0098609">
    <property type="term" value="P:cell-cell adhesion"/>
    <property type="evidence" value="ECO:0000314"/>
    <property type="project" value="MGI"/>
</dbReference>
<dbReference type="GO" id="GO:0006397">
    <property type="term" value="P:mRNA processing"/>
    <property type="evidence" value="ECO:0007669"/>
    <property type="project" value="UniProtKB-KW"/>
</dbReference>
<dbReference type="GO" id="GO:0008380">
    <property type="term" value="P:RNA splicing"/>
    <property type="evidence" value="ECO:0007669"/>
    <property type="project" value="UniProtKB-KW"/>
</dbReference>
<dbReference type="InterPro" id="IPR039853">
    <property type="entry name" value="Pinin"/>
</dbReference>
<dbReference type="InterPro" id="IPR006786">
    <property type="entry name" value="Pinin_SDK_MemA"/>
</dbReference>
<dbReference type="InterPro" id="IPR006787">
    <property type="entry name" value="Pinin_SDK_N"/>
</dbReference>
<dbReference type="PANTHER" id="PTHR12707:SF0">
    <property type="entry name" value="PININ"/>
    <property type="match status" value="1"/>
</dbReference>
<dbReference type="PANTHER" id="PTHR12707">
    <property type="entry name" value="PINN"/>
    <property type="match status" value="1"/>
</dbReference>
<dbReference type="Pfam" id="PF04696">
    <property type="entry name" value="Pinin_SDK_memA"/>
    <property type="match status" value="1"/>
</dbReference>
<dbReference type="Pfam" id="PF04697">
    <property type="entry name" value="Pinin_SDK_N"/>
    <property type="match status" value="1"/>
</dbReference>
<gene>
    <name type="primary">PNN</name>
</gene>
<name>PININ_CANLF</name>
<reference key="1">
    <citation type="journal article" date="1996" name="J. Cell Biol.">
        <title>Characterization of pinin, a novel protein associated with the desmosome-intermediate filament complex.</title>
        <authorList>
            <person name="Ouyang P."/>
            <person name="Sugrue S.P."/>
        </authorList>
    </citation>
    <scope>NUCLEOTIDE SEQUENCE [MRNA]</scope>
    <source>
        <tissue>Kidney</tissue>
    </source>
</reference>